<keyword id="KW-1185">Reference proteome</keyword>
<keyword id="KW-0687">Ribonucleoprotein</keyword>
<keyword id="KW-0689">Ribosomal protein</keyword>
<comment type="similarity">
    <text evidence="1">Belongs to the bacterial ribosomal protein bL28 family.</text>
</comment>
<dbReference type="EMBL" id="AE017333">
    <property type="protein sequence ID" value="AAU40698.1"/>
    <property type="molecule type" value="Genomic_DNA"/>
</dbReference>
<dbReference type="EMBL" id="CP000002">
    <property type="protein sequence ID" value="AAU23338.1"/>
    <property type="molecule type" value="Genomic_DNA"/>
</dbReference>
<dbReference type="RefSeq" id="WP_003181685.1">
    <property type="nucleotide sequence ID" value="NC_006322.1"/>
</dbReference>
<dbReference type="SMR" id="Q65JR6"/>
<dbReference type="STRING" id="279010.BL02327"/>
<dbReference type="GeneID" id="92861604"/>
<dbReference type="KEGG" id="bld:BLi01803"/>
<dbReference type="KEGG" id="bli:BL02327"/>
<dbReference type="eggNOG" id="COG0227">
    <property type="taxonomic scope" value="Bacteria"/>
</dbReference>
<dbReference type="HOGENOM" id="CLU_064548_7_1_9"/>
<dbReference type="Proteomes" id="UP000000606">
    <property type="component" value="Chromosome"/>
</dbReference>
<dbReference type="GO" id="GO:1990904">
    <property type="term" value="C:ribonucleoprotein complex"/>
    <property type="evidence" value="ECO:0007669"/>
    <property type="project" value="UniProtKB-KW"/>
</dbReference>
<dbReference type="GO" id="GO:0005840">
    <property type="term" value="C:ribosome"/>
    <property type="evidence" value="ECO:0007669"/>
    <property type="project" value="UniProtKB-KW"/>
</dbReference>
<dbReference type="GO" id="GO:0003735">
    <property type="term" value="F:structural constituent of ribosome"/>
    <property type="evidence" value="ECO:0007669"/>
    <property type="project" value="InterPro"/>
</dbReference>
<dbReference type="GO" id="GO:0006412">
    <property type="term" value="P:translation"/>
    <property type="evidence" value="ECO:0007669"/>
    <property type="project" value="UniProtKB-UniRule"/>
</dbReference>
<dbReference type="Gene3D" id="2.30.170.40">
    <property type="entry name" value="Ribosomal protein L28/L24"/>
    <property type="match status" value="1"/>
</dbReference>
<dbReference type="HAMAP" id="MF_00373">
    <property type="entry name" value="Ribosomal_bL28"/>
    <property type="match status" value="1"/>
</dbReference>
<dbReference type="InterPro" id="IPR050096">
    <property type="entry name" value="Bacterial_rp_bL28"/>
</dbReference>
<dbReference type="InterPro" id="IPR026569">
    <property type="entry name" value="Ribosomal_bL28"/>
</dbReference>
<dbReference type="InterPro" id="IPR034704">
    <property type="entry name" value="Ribosomal_bL28/bL31-like_sf"/>
</dbReference>
<dbReference type="InterPro" id="IPR001383">
    <property type="entry name" value="Ribosomal_bL28_bact-type"/>
</dbReference>
<dbReference type="InterPro" id="IPR037147">
    <property type="entry name" value="Ribosomal_bL28_sf"/>
</dbReference>
<dbReference type="NCBIfam" id="TIGR00009">
    <property type="entry name" value="L28"/>
    <property type="match status" value="1"/>
</dbReference>
<dbReference type="PANTHER" id="PTHR39080">
    <property type="entry name" value="50S RIBOSOMAL PROTEIN L28"/>
    <property type="match status" value="1"/>
</dbReference>
<dbReference type="PANTHER" id="PTHR39080:SF1">
    <property type="entry name" value="LARGE RIBOSOMAL SUBUNIT PROTEIN BL28A"/>
    <property type="match status" value="1"/>
</dbReference>
<dbReference type="Pfam" id="PF00830">
    <property type="entry name" value="Ribosomal_L28"/>
    <property type="match status" value="1"/>
</dbReference>
<dbReference type="SUPFAM" id="SSF143800">
    <property type="entry name" value="L28p-like"/>
    <property type="match status" value="1"/>
</dbReference>
<name>RL28_BACLD</name>
<organism>
    <name type="scientific">Bacillus licheniformis (strain ATCC 14580 / DSM 13 / JCM 2505 / CCUG 7422 / NBRC 12200 / NCIMB 9375 / NCTC 10341 / NRRL NRS-1264 / Gibson 46)</name>
    <dbReference type="NCBI Taxonomy" id="279010"/>
    <lineage>
        <taxon>Bacteria</taxon>
        <taxon>Bacillati</taxon>
        <taxon>Bacillota</taxon>
        <taxon>Bacilli</taxon>
        <taxon>Bacillales</taxon>
        <taxon>Bacillaceae</taxon>
        <taxon>Bacillus</taxon>
    </lineage>
</organism>
<reference key="1">
    <citation type="journal article" date="2004" name="J. Mol. Microbiol. Biotechnol.">
        <title>The complete genome sequence of Bacillus licheniformis DSM13, an organism with great industrial potential.</title>
        <authorList>
            <person name="Veith B."/>
            <person name="Herzberg C."/>
            <person name="Steckel S."/>
            <person name="Feesche J."/>
            <person name="Maurer K.H."/>
            <person name="Ehrenreich P."/>
            <person name="Baeumer S."/>
            <person name="Henne A."/>
            <person name="Liesegang H."/>
            <person name="Merkl R."/>
            <person name="Ehrenreich A."/>
            <person name="Gottschalk G."/>
        </authorList>
    </citation>
    <scope>NUCLEOTIDE SEQUENCE [LARGE SCALE GENOMIC DNA]</scope>
    <source>
        <strain>ATCC 14580 / DSM 13 / JCM 2505 / CCUG 7422 / NBRC 12200 / NCIMB 9375 / NCTC 10341 / NRRL NRS-1264 / Gibson 46</strain>
    </source>
</reference>
<reference key="2">
    <citation type="journal article" date="2004" name="Genome Biol.">
        <title>Complete genome sequence of the industrial bacterium Bacillus licheniformis and comparisons with closely related Bacillus species.</title>
        <authorList>
            <person name="Rey M.W."/>
            <person name="Ramaiya P."/>
            <person name="Nelson B.A."/>
            <person name="Brody-Karpin S.D."/>
            <person name="Zaretsky E.J."/>
            <person name="Tang M."/>
            <person name="Lopez de Leon A."/>
            <person name="Xiang H."/>
            <person name="Gusti V."/>
            <person name="Clausen I.G."/>
            <person name="Olsen P.B."/>
            <person name="Rasmussen M.D."/>
            <person name="Andersen J.T."/>
            <person name="Joergensen P.L."/>
            <person name="Larsen T.S."/>
            <person name="Sorokin A."/>
            <person name="Bolotin A."/>
            <person name="Lapidus A."/>
            <person name="Galleron N."/>
            <person name="Ehrlich S.D."/>
            <person name="Berka R.M."/>
        </authorList>
    </citation>
    <scope>NUCLEOTIDE SEQUENCE [LARGE SCALE GENOMIC DNA]</scope>
    <source>
        <strain>ATCC 14580 / DSM 13 / JCM 2505 / CCUG 7422 / NBRC 12200 / NCIMB 9375 / NCTC 10341 / NRRL NRS-1264 / Gibson 46</strain>
    </source>
</reference>
<evidence type="ECO:0000255" key="1">
    <source>
        <dbReference type="HAMAP-Rule" id="MF_00373"/>
    </source>
</evidence>
<evidence type="ECO:0000256" key="2">
    <source>
        <dbReference type="SAM" id="MobiDB-lite"/>
    </source>
</evidence>
<evidence type="ECO:0000305" key="3"/>
<accession>Q65JR6</accession>
<accession>Q62V71</accession>
<sequence length="62" mass="6853">MARKCVITGRKSRSGNSRSHAMNASKRTWGANVQKVRILVNGKPKKVYVSARALKSGKVERV</sequence>
<feature type="chain" id="PRO_0000178428" description="Large ribosomal subunit protein bL28">
    <location>
        <begin position="1"/>
        <end position="62"/>
    </location>
</feature>
<feature type="region of interest" description="Disordered" evidence="2">
    <location>
        <begin position="1"/>
        <end position="28"/>
    </location>
</feature>
<feature type="compositionally biased region" description="Polar residues" evidence="2">
    <location>
        <begin position="14"/>
        <end position="26"/>
    </location>
</feature>
<protein>
    <recommendedName>
        <fullName evidence="1">Large ribosomal subunit protein bL28</fullName>
    </recommendedName>
    <alternativeName>
        <fullName evidence="3">50S ribosomal protein L28</fullName>
    </alternativeName>
</protein>
<gene>
    <name evidence="1" type="primary">rpmB</name>
    <name type="ordered locus">BLi01803</name>
    <name type="ordered locus">BL02327</name>
</gene>
<proteinExistence type="inferred from homology"/>